<feature type="chain" id="PRO_1000076128" description="Glutamyl-tRNA(Gln) amidotransferase subunit A">
    <location>
        <begin position="1"/>
        <end position="486"/>
    </location>
</feature>
<feature type="active site" description="Charge relay system" evidence="1">
    <location>
        <position position="79"/>
    </location>
</feature>
<feature type="active site" description="Charge relay system" evidence="1">
    <location>
        <position position="154"/>
    </location>
</feature>
<feature type="active site" description="Acyl-ester intermediate" evidence="1">
    <location>
        <position position="178"/>
    </location>
</feature>
<reference key="1">
    <citation type="submission" date="2007-05" db="EMBL/GenBank/DDBJ databases">
        <title>Complete sequence of Dehalococcoides sp. BAV1.</title>
        <authorList>
            <consortium name="US DOE Joint Genome Institute"/>
            <person name="Copeland A."/>
            <person name="Lucas S."/>
            <person name="Lapidus A."/>
            <person name="Barry K."/>
            <person name="Detter J.C."/>
            <person name="Glavina del Rio T."/>
            <person name="Hammon N."/>
            <person name="Israni S."/>
            <person name="Pitluck S."/>
            <person name="Lowry S."/>
            <person name="Clum A."/>
            <person name="Schmutz J."/>
            <person name="Larimer F."/>
            <person name="Land M."/>
            <person name="Hauser L."/>
            <person name="Kyrpides N."/>
            <person name="Kim E."/>
            <person name="Ritalahti K.M."/>
            <person name="Loeffler F."/>
            <person name="Richardson P."/>
        </authorList>
    </citation>
    <scope>NUCLEOTIDE SEQUENCE [LARGE SCALE GENOMIC DNA]</scope>
    <source>
        <strain>ATCC BAA-2100 / JCM 16839 / KCTC 5957 / BAV1</strain>
    </source>
</reference>
<protein>
    <recommendedName>
        <fullName evidence="1">Glutamyl-tRNA(Gln) amidotransferase subunit A</fullName>
        <shortName evidence="1">Glu-ADT subunit A</shortName>
        <ecNumber evidence="1">6.3.5.7</ecNumber>
    </recommendedName>
</protein>
<sequence>MTDLVKLTIAQSHKLLKDHKISSAELTKAHLERIEKLEPEIKAFMTVCPETALSQAEAADKAIKQGDIRPLTGIPMALKDVLCTKGIRTTCSSKMLENFVPPYNAHVVDKLAKEGAVLLGKTNMDEFAMGSSTENSAYFTTRNPWNTDKVPGGSSGGSAACVAASEAVFSLGSDTGGSIRQPASFCSVTGYKPSYGMVSRYGLVAFASSLDQIGPFTKDAMDCALVMNAIAGFDDRDSTSVPQTVPDFSSGLDGNIKGFKLGVPKEYFSQNMRPDITEKINDALGVLSGLGASIDREVSLPHTPYALAVYYILAPSEASANLSRYDGVKYGYSYNPTENMWEAMEKTRAKGFGPEVKRRIMIGTYALSAGYYDAWYVKAQKVRTLISQEFNNAFEKYDALITPTTPNLPFSIGEKLNDPFEMYMCDTCTIPINIAGLPAVSIPAGFVDGLPVGLQIIGKPFADQTTMRIAHAFQCATAWHKETPRL</sequence>
<proteinExistence type="inferred from homology"/>
<evidence type="ECO:0000255" key="1">
    <source>
        <dbReference type="HAMAP-Rule" id="MF_00120"/>
    </source>
</evidence>
<name>GATA_DEHMB</name>
<accession>A5FQ07</accession>
<organism>
    <name type="scientific">Dehalococcoides mccartyi (strain ATCC BAA-2100 / JCM 16839 / KCTC 5957 / BAV1)</name>
    <dbReference type="NCBI Taxonomy" id="216389"/>
    <lineage>
        <taxon>Bacteria</taxon>
        <taxon>Bacillati</taxon>
        <taxon>Chloroflexota</taxon>
        <taxon>Dehalococcoidia</taxon>
        <taxon>Dehalococcoidales</taxon>
        <taxon>Dehalococcoidaceae</taxon>
        <taxon>Dehalococcoides</taxon>
    </lineage>
</organism>
<comment type="function">
    <text evidence="1">Allows the formation of correctly charged Gln-tRNA(Gln) through the transamidation of misacylated Glu-tRNA(Gln) in organisms which lack glutaminyl-tRNA synthetase. The reaction takes place in the presence of glutamine and ATP through an activated gamma-phospho-Glu-tRNA(Gln).</text>
</comment>
<comment type="catalytic activity">
    <reaction evidence="1">
        <text>L-glutamyl-tRNA(Gln) + L-glutamine + ATP + H2O = L-glutaminyl-tRNA(Gln) + L-glutamate + ADP + phosphate + H(+)</text>
        <dbReference type="Rhea" id="RHEA:17521"/>
        <dbReference type="Rhea" id="RHEA-COMP:9681"/>
        <dbReference type="Rhea" id="RHEA-COMP:9684"/>
        <dbReference type="ChEBI" id="CHEBI:15377"/>
        <dbReference type="ChEBI" id="CHEBI:15378"/>
        <dbReference type="ChEBI" id="CHEBI:29985"/>
        <dbReference type="ChEBI" id="CHEBI:30616"/>
        <dbReference type="ChEBI" id="CHEBI:43474"/>
        <dbReference type="ChEBI" id="CHEBI:58359"/>
        <dbReference type="ChEBI" id="CHEBI:78520"/>
        <dbReference type="ChEBI" id="CHEBI:78521"/>
        <dbReference type="ChEBI" id="CHEBI:456216"/>
        <dbReference type="EC" id="6.3.5.7"/>
    </reaction>
</comment>
<comment type="subunit">
    <text evidence="1">Heterotrimer of A, B and C subunits.</text>
</comment>
<comment type="similarity">
    <text evidence="1">Belongs to the amidase family. GatA subfamily.</text>
</comment>
<dbReference type="EC" id="6.3.5.7" evidence="1"/>
<dbReference type="EMBL" id="CP000688">
    <property type="protein sequence ID" value="ABQ17725.1"/>
    <property type="molecule type" value="Genomic_DNA"/>
</dbReference>
<dbReference type="SMR" id="A5FQ07"/>
<dbReference type="KEGG" id="deb:DehaBAV1_1146"/>
<dbReference type="PATRIC" id="fig|216389.18.peg.1209"/>
<dbReference type="HOGENOM" id="CLU_009600_0_3_0"/>
<dbReference type="GO" id="GO:0030956">
    <property type="term" value="C:glutamyl-tRNA(Gln) amidotransferase complex"/>
    <property type="evidence" value="ECO:0007669"/>
    <property type="project" value="InterPro"/>
</dbReference>
<dbReference type="GO" id="GO:0005524">
    <property type="term" value="F:ATP binding"/>
    <property type="evidence" value="ECO:0007669"/>
    <property type="project" value="UniProtKB-KW"/>
</dbReference>
<dbReference type="GO" id="GO:0050567">
    <property type="term" value="F:glutaminyl-tRNA synthase (glutamine-hydrolyzing) activity"/>
    <property type="evidence" value="ECO:0007669"/>
    <property type="project" value="UniProtKB-UniRule"/>
</dbReference>
<dbReference type="GO" id="GO:0006412">
    <property type="term" value="P:translation"/>
    <property type="evidence" value="ECO:0007669"/>
    <property type="project" value="UniProtKB-UniRule"/>
</dbReference>
<dbReference type="Gene3D" id="3.90.1300.10">
    <property type="entry name" value="Amidase signature (AS) domain"/>
    <property type="match status" value="1"/>
</dbReference>
<dbReference type="HAMAP" id="MF_00120">
    <property type="entry name" value="GatA"/>
    <property type="match status" value="1"/>
</dbReference>
<dbReference type="InterPro" id="IPR000120">
    <property type="entry name" value="Amidase"/>
</dbReference>
<dbReference type="InterPro" id="IPR020556">
    <property type="entry name" value="Amidase_CS"/>
</dbReference>
<dbReference type="InterPro" id="IPR023631">
    <property type="entry name" value="Amidase_dom"/>
</dbReference>
<dbReference type="InterPro" id="IPR036928">
    <property type="entry name" value="AS_sf"/>
</dbReference>
<dbReference type="InterPro" id="IPR004412">
    <property type="entry name" value="GatA"/>
</dbReference>
<dbReference type="NCBIfam" id="TIGR00132">
    <property type="entry name" value="gatA"/>
    <property type="match status" value="1"/>
</dbReference>
<dbReference type="PANTHER" id="PTHR11895:SF151">
    <property type="entry name" value="GLUTAMYL-TRNA(GLN) AMIDOTRANSFERASE SUBUNIT A"/>
    <property type="match status" value="1"/>
</dbReference>
<dbReference type="PANTHER" id="PTHR11895">
    <property type="entry name" value="TRANSAMIDASE"/>
    <property type="match status" value="1"/>
</dbReference>
<dbReference type="Pfam" id="PF01425">
    <property type="entry name" value="Amidase"/>
    <property type="match status" value="1"/>
</dbReference>
<dbReference type="SUPFAM" id="SSF75304">
    <property type="entry name" value="Amidase signature (AS) enzymes"/>
    <property type="match status" value="1"/>
</dbReference>
<dbReference type="PROSITE" id="PS00571">
    <property type="entry name" value="AMIDASES"/>
    <property type="match status" value="1"/>
</dbReference>
<keyword id="KW-0067">ATP-binding</keyword>
<keyword id="KW-0436">Ligase</keyword>
<keyword id="KW-0547">Nucleotide-binding</keyword>
<keyword id="KW-0648">Protein biosynthesis</keyword>
<gene>
    <name evidence="1" type="primary">gatA</name>
    <name type="ordered locus">DehaBAV1_1146</name>
</gene>